<reference key="1">
    <citation type="journal article" date="2009" name="PLoS Genet.">
        <title>Organised genome dynamics in the Escherichia coli species results in highly diverse adaptive paths.</title>
        <authorList>
            <person name="Touchon M."/>
            <person name="Hoede C."/>
            <person name="Tenaillon O."/>
            <person name="Barbe V."/>
            <person name="Baeriswyl S."/>
            <person name="Bidet P."/>
            <person name="Bingen E."/>
            <person name="Bonacorsi S."/>
            <person name="Bouchier C."/>
            <person name="Bouvet O."/>
            <person name="Calteau A."/>
            <person name="Chiapello H."/>
            <person name="Clermont O."/>
            <person name="Cruveiller S."/>
            <person name="Danchin A."/>
            <person name="Diard M."/>
            <person name="Dossat C."/>
            <person name="Karoui M.E."/>
            <person name="Frapy E."/>
            <person name="Garry L."/>
            <person name="Ghigo J.M."/>
            <person name="Gilles A.M."/>
            <person name="Johnson J."/>
            <person name="Le Bouguenec C."/>
            <person name="Lescat M."/>
            <person name="Mangenot S."/>
            <person name="Martinez-Jehanne V."/>
            <person name="Matic I."/>
            <person name="Nassif X."/>
            <person name="Oztas S."/>
            <person name="Petit M.A."/>
            <person name="Pichon C."/>
            <person name="Rouy Z."/>
            <person name="Ruf C.S."/>
            <person name="Schneider D."/>
            <person name="Tourret J."/>
            <person name="Vacherie B."/>
            <person name="Vallenet D."/>
            <person name="Medigue C."/>
            <person name="Rocha E.P.C."/>
            <person name="Denamur E."/>
        </authorList>
    </citation>
    <scope>NUCLEOTIDE SEQUENCE [LARGE SCALE GENOMIC DNA]</scope>
    <source>
        <strain>IAI39 / ExPEC</strain>
    </source>
</reference>
<protein>
    <recommendedName>
        <fullName evidence="1">Ribosome maturation factor RimP</fullName>
    </recommendedName>
</protein>
<dbReference type="EMBL" id="CU928164">
    <property type="protein sequence ID" value="CAR19783.1"/>
    <property type="molecule type" value="Genomic_DNA"/>
</dbReference>
<dbReference type="RefSeq" id="WP_001300397.1">
    <property type="nucleotide sequence ID" value="NC_011750.1"/>
</dbReference>
<dbReference type="RefSeq" id="YP_002409570.1">
    <property type="nucleotide sequence ID" value="NC_011750.1"/>
</dbReference>
<dbReference type="SMR" id="B7NKN9"/>
<dbReference type="STRING" id="585057.ECIAI39_3667"/>
<dbReference type="GeneID" id="93778813"/>
<dbReference type="KEGG" id="ect:ECIAI39_3667"/>
<dbReference type="PATRIC" id="fig|585057.6.peg.3800"/>
<dbReference type="HOGENOM" id="CLU_070525_1_1_6"/>
<dbReference type="Proteomes" id="UP000000749">
    <property type="component" value="Chromosome"/>
</dbReference>
<dbReference type="GO" id="GO:0005829">
    <property type="term" value="C:cytosol"/>
    <property type="evidence" value="ECO:0007669"/>
    <property type="project" value="TreeGrafter"/>
</dbReference>
<dbReference type="GO" id="GO:0000028">
    <property type="term" value="P:ribosomal small subunit assembly"/>
    <property type="evidence" value="ECO:0007669"/>
    <property type="project" value="TreeGrafter"/>
</dbReference>
<dbReference type="GO" id="GO:0006412">
    <property type="term" value="P:translation"/>
    <property type="evidence" value="ECO:0007669"/>
    <property type="project" value="TreeGrafter"/>
</dbReference>
<dbReference type="CDD" id="cd01734">
    <property type="entry name" value="YlxS_C"/>
    <property type="match status" value="1"/>
</dbReference>
<dbReference type="FunFam" id="2.30.30.180:FF:000001">
    <property type="entry name" value="Ribosome maturation factor RimP"/>
    <property type="match status" value="1"/>
</dbReference>
<dbReference type="FunFam" id="3.30.300.70:FF:000001">
    <property type="entry name" value="Ribosome maturation factor RimP"/>
    <property type="match status" value="1"/>
</dbReference>
<dbReference type="Gene3D" id="2.30.30.180">
    <property type="entry name" value="Ribosome maturation factor RimP, C-terminal domain"/>
    <property type="match status" value="1"/>
</dbReference>
<dbReference type="Gene3D" id="3.30.300.70">
    <property type="entry name" value="RimP-like superfamily, N-terminal"/>
    <property type="match status" value="1"/>
</dbReference>
<dbReference type="HAMAP" id="MF_01077">
    <property type="entry name" value="RimP"/>
    <property type="match status" value="1"/>
</dbReference>
<dbReference type="InterPro" id="IPR003728">
    <property type="entry name" value="Ribosome_maturation_RimP"/>
</dbReference>
<dbReference type="InterPro" id="IPR028998">
    <property type="entry name" value="RimP_C"/>
</dbReference>
<dbReference type="InterPro" id="IPR036847">
    <property type="entry name" value="RimP_C_sf"/>
</dbReference>
<dbReference type="InterPro" id="IPR028989">
    <property type="entry name" value="RimP_N"/>
</dbReference>
<dbReference type="InterPro" id="IPR035956">
    <property type="entry name" value="RimP_N_sf"/>
</dbReference>
<dbReference type="NCBIfam" id="NF000927">
    <property type="entry name" value="PRK00092.1-1"/>
    <property type="match status" value="1"/>
</dbReference>
<dbReference type="PANTHER" id="PTHR33867">
    <property type="entry name" value="RIBOSOME MATURATION FACTOR RIMP"/>
    <property type="match status" value="1"/>
</dbReference>
<dbReference type="PANTHER" id="PTHR33867:SF1">
    <property type="entry name" value="RIBOSOME MATURATION FACTOR RIMP"/>
    <property type="match status" value="1"/>
</dbReference>
<dbReference type="Pfam" id="PF17384">
    <property type="entry name" value="DUF150_C"/>
    <property type="match status" value="1"/>
</dbReference>
<dbReference type="Pfam" id="PF02576">
    <property type="entry name" value="RimP_N"/>
    <property type="match status" value="1"/>
</dbReference>
<dbReference type="SUPFAM" id="SSF74942">
    <property type="entry name" value="YhbC-like, C-terminal domain"/>
    <property type="match status" value="1"/>
</dbReference>
<dbReference type="SUPFAM" id="SSF75420">
    <property type="entry name" value="YhbC-like, N-terminal domain"/>
    <property type="match status" value="1"/>
</dbReference>
<proteinExistence type="inferred from homology"/>
<name>RIMP_ECO7I</name>
<accession>B7NKN9</accession>
<gene>
    <name evidence="1" type="primary">rimP</name>
    <name type="ordered locus">ECIAI39_3667</name>
</gene>
<organism>
    <name type="scientific">Escherichia coli O7:K1 (strain IAI39 / ExPEC)</name>
    <dbReference type="NCBI Taxonomy" id="585057"/>
    <lineage>
        <taxon>Bacteria</taxon>
        <taxon>Pseudomonadati</taxon>
        <taxon>Pseudomonadota</taxon>
        <taxon>Gammaproteobacteria</taxon>
        <taxon>Enterobacterales</taxon>
        <taxon>Enterobacteriaceae</taxon>
        <taxon>Escherichia</taxon>
    </lineage>
</organism>
<comment type="function">
    <text evidence="1">Required for maturation of 30S ribosomal subunits.</text>
</comment>
<comment type="subcellular location">
    <subcellularLocation>
        <location evidence="1">Cytoplasm</location>
    </subcellularLocation>
</comment>
<comment type="similarity">
    <text evidence="1">Belongs to the RimP family.</text>
</comment>
<feature type="chain" id="PRO_0000384662" description="Ribosome maturation factor RimP">
    <location>
        <begin position="1"/>
        <end position="150"/>
    </location>
</feature>
<sequence length="150" mass="16651">MSTLEQKLTEMITAPVEALGFELVGIEFIRGRTSTLRIYIDSEDGINVDDCADVSHQVSAVLDVEDPITVAYNLEVSSPGLDRPLFTAEHYARFVGEEVTLVLRMAVQNRRKWQGVIKAVDGEMITVTVEGKDEVFALSNIQKANLVPHF</sequence>
<keyword id="KW-0963">Cytoplasm</keyword>
<keyword id="KW-0690">Ribosome biogenesis</keyword>
<evidence type="ECO:0000255" key="1">
    <source>
        <dbReference type="HAMAP-Rule" id="MF_01077"/>
    </source>
</evidence>